<protein>
    <recommendedName>
        <fullName evidence="1">Deoxyguanosinetriphosphate triphosphohydrolase</fullName>
        <shortName evidence="1">dGTP triphosphohydrolase</shortName>
        <shortName evidence="1">dGTPase</shortName>
        <ecNumber evidence="1">3.1.5.1</ecNumber>
    </recommendedName>
</protein>
<dbReference type="EC" id="3.1.5.1" evidence="1"/>
<dbReference type="EMBL" id="CP000970">
    <property type="protein sequence ID" value="ACB17804.1"/>
    <property type="molecule type" value="Genomic_DNA"/>
</dbReference>
<dbReference type="RefSeq" id="WP_000057067.1">
    <property type="nucleotide sequence ID" value="NC_010498.1"/>
</dbReference>
<dbReference type="SMR" id="B1LGW3"/>
<dbReference type="KEGG" id="ecm:EcSMS35_0172"/>
<dbReference type="HOGENOM" id="CLU_028163_2_1_6"/>
<dbReference type="Proteomes" id="UP000007011">
    <property type="component" value="Chromosome"/>
</dbReference>
<dbReference type="GO" id="GO:0008832">
    <property type="term" value="F:dGTPase activity"/>
    <property type="evidence" value="ECO:0007669"/>
    <property type="project" value="UniProtKB-UniRule"/>
</dbReference>
<dbReference type="GO" id="GO:0000287">
    <property type="term" value="F:magnesium ion binding"/>
    <property type="evidence" value="ECO:0007669"/>
    <property type="project" value="UniProtKB-UniRule"/>
</dbReference>
<dbReference type="GO" id="GO:0006203">
    <property type="term" value="P:dGTP catabolic process"/>
    <property type="evidence" value="ECO:0007669"/>
    <property type="project" value="InterPro"/>
</dbReference>
<dbReference type="CDD" id="cd00077">
    <property type="entry name" value="HDc"/>
    <property type="match status" value="1"/>
</dbReference>
<dbReference type="FunFam" id="1.10.3210.10:FF:000009">
    <property type="entry name" value="Deoxyguanosinetriphosphate triphosphohydrolase"/>
    <property type="match status" value="1"/>
</dbReference>
<dbReference type="FunFam" id="1.10.3210.10:FF:000010">
    <property type="entry name" value="Deoxyguanosinetriphosphate triphosphohydrolase"/>
    <property type="match status" value="1"/>
</dbReference>
<dbReference type="FunFam" id="1.10.3410.10:FF:000001">
    <property type="entry name" value="Deoxyguanosinetriphosphate triphosphohydrolase"/>
    <property type="match status" value="1"/>
</dbReference>
<dbReference type="Gene3D" id="1.10.3210.10">
    <property type="entry name" value="Hypothetical protein af1432"/>
    <property type="match status" value="2"/>
</dbReference>
<dbReference type="Gene3D" id="1.10.3410.10">
    <property type="entry name" value="putative deoxyguanosinetriphosphate triphosphohydrolase like domain"/>
    <property type="match status" value="1"/>
</dbReference>
<dbReference type="HAMAP" id="MF_00030">
    <property type="entry name" value="dGTPase_type1"/>
    <property type="match status" value="1"/>
</dbReference>
<dbReference type="InterPro" id="IPR023293">
    <property type="entry name" value="dGTP_triP_hydro_central_sf"/>
</dbReference>
<dbReference type="InterPro" id="IPR006261">
    <property type="entry name" value="dGTPase"/>
</dbReference>
<dbReference type="InterPro" id="IPR050135">
    <property type="entry name" value="dGTPase-like"/>
</dbReference>
<dbReference type="InterPro" id="IPR020779">
    <property type="entry name" value="dNTPase_1"/>
</dbReference>
<dbReference type="InterPro" id="IPR003607">
    <property type="entry name" value="HD/PDEase_dom"/>
</dbReference>
<dbReference type="InterPro" id="IPR006674">
    <property type="entry name" value="HD_domain"/>
</dbReference>
<dbReference type="NCBIfam" id="TIGR01353">
    <property type="entry name" value="dGTP_triPase"/>
    <property type="match status" value="1"/>
</dbReference>
<dbReference type="NCBIfam" id="NF003429">
    <property type="entry name" value="PRK04926.1"/>
    <property type="match status" value="1"/>
</dbReference>
<dbReference type="PANTHER" id="PTHR11373:SF32">
    <property type="entry name" value="DEOXYGUANOSINETRIPHOSPHATE TRIPHOSPHOHYDROLASE"/>
    <property type="match status" value="1"/>
</dbReference>
<dbReference type="PANTHER" id="PTHR11373">
    <property type="entry name" value="DEOXYNUCLEOSIDE TRIPHOSPHATE TRIPHOSPHOHYDROLASE"/>
    <property type="match status" value="1"/>
</dbReference>
<dbReference type="Pfam" id="PF01966">
    <property type="entry name" value="HD"/>
    <property type="match status" value="1"/>
</dbReference>
<dbReference type="SMART" id="SM00471">
    <property type="entry name" value="HDc"/>
    <property type="match status" value="1"/>
</dbReference>
<dbReference type="SUPFAM" id="SSF109604">
    <property type="entry name" value="HD-domain/PDEase-like"/>
    <property type="match status" value="1"/>
</dbReference>
<dbReference type="PROSITE" id="PS51831">
    <property type="entry name" value="HD"/>
    <property type="match status" value="1"/>
</dbReference>
<feature type="chain" id="PRO_1000116442" description="Deoxyguanosinetriphosphate triphosphohydrolase">
    <location>
        <begin position="1"/>
        <end position="505"/>
    </location>
</feature>
<feature type="domain" description="HD" evidence="2">
    <location>
        <begin position="66"/>
        <end position="273"/>
    </location>
</feature>
<name>DGTP_ECOSM</name>
<accession>B1LGW3</accession>
<comment type="function">
    <text evidence="1">dGTPase preferentially hydrolyzes dGTP over the other canonical NTPs.</text>
</comment>
<comment type="catalytic activity">
    <reaction evidence="1">
        <text>dGTP + H2O = 2'-deoxyguanosine + triphosphate + H(+)</text>
        <dbReference type="Rhea" id="RHEA:15193"/>
        <dbReference type="ChEBI" id="CHEBI:15377"/>
        <dbReference type="ChEBI" id="CHEBI:15378"/>
        <dbReference type="ChEBI" id="CHEBI:17172"/>
        <dbReference type="ChEBI" id="CHEBI:18036"/>
        <dbReference type="ChEBI" id="CHEBI:61429"/>
        <dbReference type="EC" id="3.1.5.1"/>
    </reaction>
</comment>
<comment type="cofactor">
    <cofactor evidence="1">
        <name>Mg(2+)</name>
        <dbReference type="ChEBI" id="CHEBI:18420"/>
    </cofactor>
</comment>
<comment type="subunit">
    <text evidence="1">Homotetramer.</text>
</comment>
<comment type="similarity">
    <text evidence="1">Belongs to the dGTPase family. Type 1 subfamily.</text>
</comment>
<sequence>MAQIDFRKKINWHRRYRSPQGVKTEHEILRIFESDRGRIINSPAIRRLQQKTQVFPLERNAAVRTRLTHSMEVQQVGRYIAKEILSRLKELKLLEAYGLDELTGPFESIVEMSCLMHDIGNPPFGHFGEAAINDWFRQRLHPEDAESQPLTDDRCSVAALRLRDGEEPLNELRRKIRQDLCHFEGNAQGIRLVHTLMRMNLTWAQVGGILKYTRPAWWRGETPETHHYLMKKPGYYLSEEAYIARLRKELNLALYSRFPLTWIMEAADDISYCVADLEDAVEKRIFTVEQLYHHLHEAWGQHEKGSLFSLVVENAWEKSRSNSLSRSTEDQFFMYLRVNTLNKLVPYAAQRFIDNLPAIFAGTFNHALLEDASECSDLLKLYKNVAVKHVFSHPDVEQLELQGYRVISGLLEIYRPLLSLSLSDFTELVEKERVKRFPIESRLFHKLSTRHRLAYVEAVSKLPSDSPEFPLWEYYYRCRLLQDYISGMTDLYAWDEYRRLMAVEQ</sequence>
<gene>
    <name evidence="1" type="primary">dgt</name>
    <name type="ordered locus">EcSMS35_0172</name>
</gene>
<organism>
    <name type="scientific">Escherichia coli (strain SMS-3-5 / SECEC)</name>
    <dbReference type="NCBI Taxonomy" id="439855"/>
    <lineage>
        <taxon>Bacteria</taxon>
        <taxon>Pseudomonadati</taxon>
        <taxon>Pseudomonadota</taxon>
        <taxon>Gammaproteobacteria</taxon>
        <taxon>Enterobacterales</taxon>
        <taxon>Enterobacteriaceae</taxon>
        <taxon>Escherichia</taxon>
    </lineage>
</organism>
<evidence type="ECO:0000255" key="1">
    <source>
        <dbReference type="HAMAP-Rule" id="MF_00030"/>
    </source>
</evidence>
<evidence type="ECO:0000255" key="2">
    <source>
        <dbReference type="PROSITE-ProRule" id="PRU01175"/>
    </source>
</evidence>
<reference key="1">
    <citation type="journal article" date="2008" name="J. Bacteriol.">
        <title>Insights into the environmental resistance gene pool from the genome sequence of the multidrug-resistant environmental isolate Escherichia coli SMS-3-5.</title>
        <authorList>
            <person name="Fricke W.F."/>
            <person name="Wright M.S."/>
            <person name="Lindell A.H."/>
            <person name="Harkins D.M."/>
            <person name="Baker-Austin C."/>
            <person name="Ravel J."/>
            <person name="Stepanauskas R."/>
        </authorList>
    </citation>
    <scope>NUCLEOTIDE SEQUENCE [LARGE SCALE GENOMIC DNA]</scope>
    <source>
        <strain>SMS-3-5 / SECEC</strain>
    </source>
</reference>
<keyword id="KW-0378">Hydrolase</keyword>
<keyword id="KW-0460">Magnesium</keyword>
<proteinExistence type="inferred from homology"/>